<feature type="chain" id="PRO_0000424471" description="Ferritin heavy chain">
    <location>
        <begin position="1"/>
        <end position="182"/>
    </location>
</feature>
<feature type="initiator methionine" description="Removed; alternate" evidence="1">
    <location>
        <position position="1"/>
    </location>
</feature>
<feature type="chain" id="PRO_0000252364" description="Ferritin heavy chain, N-terminally processed">
    <location>
        <begin position="2"/>
        <end position="182"/>
    </location>
</feature>
<feature type="domain" description="Ferritin-like diiron" evidence="4">
    <location>
        <begin position="11"/>
        <end position="160"/>
    </location>
</feature>
<feature type="binding site" evidence="4">
    <location>
        <position position="28"/>
    </location>
    <ligand>
        <name>Fe cation</name>
        <dbReference type="ChEBI" id="CHEBI:24875"/>
        <label>1</label>
    </ligand>
</feature>
<feature type="binding site" evidence="4">
    <location>
        <position position="63"/>
    </location>
    <ligand>
        <name>Fe cation</name>
        <dbReference type="ChEBI" id="CHEBI:24875"/>
        <label>1</label>
    </ligand>
</feature>
<feature type="binding site" evidence="4">
    <location>
        <position position="63"/>
    </location>
    <ligand>
        <name>Fe cation</name>
        <dbReference type="ChEBI" id="CHEBI:24875"/>
        <label>2</label>
    </ligand>
</feature>
<feature type="binding site" evidence="4">
    <location>
        <position position="66"/>
    </location>
    <ligand>
        <name>Fe cation</name>
        <dbReference type="ChEBI" id="CHEBI:24875"/>
        <label>1</label>
    </ligand>
</feature>
<feature type="binding site" evidence="4">
    <location>
        <position position="108"/>
    </location>
    <ligand>
        <name>Fe cation</name>
        <dbReference type="ChEBI" id="CHEBI:24875"/>
        <label>2</label>
    </ligand>
</feature>
<feature type="binding site" evidence="4">
    <location>
        <position position="142"/>
    </location>
    <ligand>
        <name>Fe cation</name>
        <dbReference type="ChEBI" id="CHEBI:24875"/>
        <label>2</label>
    </ligand>
</feature>
<feature type="modified residue" description="N-acetylmethionine" evidence="1">
    <location>
        <position position="1"/>
    </location>
</feature>
<feature type="modified residue" description="N-acetylthreonine; in Ferritin heavy chain, N-terminally processed" evidence="1">
    <location>
        <position position="2"/>
    </location>
</feature>
<comment type="function">
    <text evidence="1 2">Stores iron in a soluble, non-toxic, readily available form (By similarity). Important for iron homeostasis (By similarity). Has ferroxidase activity (By similarity). Iron is taken up in the ferrous form and deposited as ferric hydroxides after oxidation (By similarity). Also plays a role in delivery of iron to cells (By similarity). Mediates iron uptake in capsule cells of the developing kidney (By similarity). Delivery to lysosomes is mediated by the cargo receptor NCOA4 for autophagic degradation and release of iron (By similarity).</text>
</comment>
<comment type="catalytic activity">
    <reaction evidence="1">
        <text>4 Fe(2+) + O2 + 4 H(+) = 4 Fe(3+) + 2 H2O</text>
        <dbReference type="Rhea" id="RHEA:11148"/>
        <dbReference type="ChEBI" id="CHEBI:15377"/>
        <dbReference type="ChEBI" id="CHEBI:15378"/>
        <dbReference type="ChEBI" id="CHEBI:15379"/>
        <dbReference type="ChEBI" id="CHEBI:29033"/>
        <dbReference type="ChEBI" id="CHEBI:29034"/>
        <dbReference type="EC" id="1.16.3.1"/>
    </reaction>
</comment>
<comment type="subunit">
    <text evidence="1 2">Oligomer of 24 subunits. There are two types of subunits: L (light) chain and H (heavy) chain. The major chain can be light or heavy, depending on the species and tissue type. The functional molecule forms a roughly spherical shell with a diameter of 12 nm and contains a central cavity into which the insoluble mineral iron core is deposited. Interacts with NCOA4; NCOA4 promotes targeting of the iron-binding ferritin complex to autolysosomes following starvation or iron depletion (By similarity).</text>
</comment>
<comment type="subcellular location">
    <subcellularLocation>
        <location evidence="3">Cytoplasm</location>
    </subcellularLocation>
    <subcellularLocation>
        <location evidence="1">Lysosome</location>
    </subcellularLocation>
    <subcellularLocation>
        <location evidence="1">Cytoplasmic vesicle</location>
        <location evidence="1">Autophagosome</location>
    </subcellularLocation>
</comment>
<comment type="similarity">
    <text evidence="5">Belongs to the ferritin family.</text>
</comment>
<keyword id="KW-0007">Acetylation</keyword>
<keyword id="KW-0963">Cytoplasm</keyword>
<keyword id="KW-0968">Cytoplasmic vesicle</keyword>
<keyword id="KW-0408">Iron</keyword>
<keyword id="KW-0409">Iron storage</keyword>
<keyword id="KW-0458">Lysosome</keyword>
<keyword id="KW-0479">Metal-binding</keyword>
<keyword id="KW-0560">Oxidoreductase</keyword>
<keyword id="KW-1185">Reference proteome</keyword>
<protein>
    <recommendedName>
        <fullName>Ferritin heavy chain</fullName>
        <shortName>Ferritin H subunit</shortName>
        <ecNumber evidence="1">1.16.3.1</ecNumber>
    </recommendedName>
    <component>
        <recommendedName>
            <fullName>Ferritin heavy chain, N-terminally processed</fullName>
        </recommendedName>
    </component>
</protein>
<gene>
    <name type="primary">FTH1</name>
    <name type="synonym">FTH</name>
</gene>
<name>FRIH_HORSE</name>
<dbReference type="EC" id="1.16.3.1" evidence="1"/>
<dbReference type="EMBL" id="AY112742">
    <property type="protein sequence ID" value="AAM51631.1"/>
    <property type="molecule type" value="mRNA"/>
</dbReference>
<dbReference type="EMBL" id="AB175615">
    <property type="protein sequence ID" value="BAD96180.1"/>
    <property type="molecule type" value="mRNA"/>
</dbReference>
<dbReference type="EMBL" id="AB175616">
    <property type="protein sequence ID" value="BAD96181.1"/>
    <property type="molecule type" value="mRNA"/>
</dbReference>
<dbReference type="RefSeq" id="NP_001093883.1">
    <property type="nucleotide sequence ID" value="NM_001100413.1"/>
</dbReference>
<dbReference type="RefSeq" id="NP_001238983.1">
    <property type="nucleotide sequence ID" value="NM_001252054.1"/>
</dbReference>
<dbReference type="SMR" id="Q8MIP0"/>
<dbReference type="BioGRID" id="769381">
    <property type="interactions" value="1"/>
</dbReference>
<dbReference type="FunCoup" id="Q8MIP0">
    <property type="interactions" value="781"/>
</dbReference>
<dbReference type="STRING" id="9796.ENSECAP00000001231"/>
<dbReference type="PaxDb" id="9796-ENSECAP00000001231"/>
<dbReference type="PeptideAtlas" id="Q8MIP0"/>
<dbReference type="Ensembl" id="ENSECAT00000003994.3">
    <property type="protein sequence ID" value="ENSECAP00000002766.2"/>
    <property type="gene ID" value="ENSECAG00000003925.3"/>
</dbReference>
<dbReference type="Ensembl" id="ENSECAT00000008883.2">
    <property type="protein sequence ID" value="ENSECAP00000006698.2"/>
    <property type="gene ID" value="ENSECAG00000008683.3"/>
</dbReference>
<dbReference type="Ensembl" id="ENSECAT00000093326.1">
    <property type="protein sequence ID" value="ENSECAP00000058282.1"/>
    <property type="gene ID" value="ENSECAG00000003925.3"/>
</dbReference>
<dbReference type="Ensembl" id="ENSECAT00000117701.1">
    <property type="protein sequence ID" value="ENSECAP00000059652.1"/>
    <property type="gene ID" value="ENSECAG00000003925.3"/>
</dbReference>
<dbReference type="GeneID" id="100062811"/>
<dbReference type="KEGG" id="ecb:100051036"/>
<dbReference type="KEGG" id="ecb:100062811"/>
<dbReference type="CTD" id="2495"/>
<dbReference type="GeneTree" id="ENSGT00950000182841"/>
<dbReference type="HOGENOM" id="CLU_065681_4_0_1"/>
<dbReference type="InParanoid" id="Q8MIP0"/>
<dbReference type="OMA" id="NHLVNIE"/>
<dbReference type="OrthoDB" id="186462at2759"/>
<dbReference type="TreeFam" id="TF313885"/>
<dbReference type="Proteomes" id="UP000002281">
    <property type="component" value="Chromosome 12"/>
</dbReference>
<dbReference type="Proteomes" id="UP000002281">
    <property type="component" value="Chromosome X"/>
</dbReference>
<dbReference type="Bgee" id="ENSECAG00000001669">
    <property type="expression patterns" value="Expressed in gluteus medius and 17 other cell types or tissues"/>
</dbReference>
<dbReference type="ExpressionAtlas" id="Q8MIP0">
    <property type="expression patterns" value="baseline"/>
</dbReference>
<dbReference type="GO" id="GO:0005776">
    <property type="term" value="C:autophagosome"/>
    <property type="evidence" value="ECO:0007669"/>
    <property type="project" value="UniProtKB-SubCell"/>
</dbReference>
<dbReference type="GO" id="GO:0005737">
    <property type="term" value="C:cytoplasm"/>
    <property type="evidence" value="ECO:0000318"/>
    <property type="project" value="GO_Central"/>
</dbReference>
<dbReference type="GO" id="GO:0031410">
    <property type="term" value="C:cytoplasmic vesicle"/>
    <property type="evidence" value="ECO:0007669"/>
    <property type="project" value="UniProtKB-KW"/>
</dbReference>
<dbReference type="GO" id="GO:0005764">
    <property type="term" value="C:lysosome"/>
    <property type="evidence" value="ECO:0007669"/>
    <property type="project" value="UniProtKB-SubCell"/>
</dbReference>
<dbReference type="GO" id="GO:0008199">
    <property type="term" value="F:ferric iron binding"/>
    <property type="evidence" value="ECO:0000318"/>
    <property type="project" value="GO_Central"/>
</dbReference>
<dbReference type="GO" id="GO:0008198">
    <property type="term" value="F:ferrous iron binding"/>
    <property type="evidence" value="ECO:0000318"/>
    <property type="project" value="GO_Central"/>
</dbReference>
<dbReference type="GO" id="GO:0004322">
    <property type="term" value="F:ferroxidase activity"/>
    <property type="evidence" value="ECO:0007669"/>
    <property type="project" value="UniProtKB-EC"/>
</dbReference>
<dbReference type="GO" id="GO:0006955">
    <property type="term" value="P:immune response"/>
    <property type="evidence" value="ECO:0000250"/>
    <property type="project" value="UniProtKB"/>
</dbReference>
<dbReference type="GO" id="GO:0006879">
    <property type="term" value="P:intracellular iron ion homeostasis"/>
    <property type="evidence" value="ECO:0007669"/>
    <property type="project" value="UniProtKB-KW"/>
</dbReference>
<dbReference type="GO" id="GO:0006826">
    <property type="term" value="P:iron ion transport"/>
    <property type="evidence" value="ECO:0000318"/>
    <property type="project" value="GO_Central"/>
</dbReference>
<dbReference type="GO" id="GO:0008285">
    <property type="term" value="P:negative regulation of cell population proliferation"/>
    <property type="evidence" value="ECO:0000250"/>
    <property type="project" value="UniProtKB"/>
</dbReference>
<dbReference type="GO" id="GO:0110076">
    <property type="term" value="P:negative regulation of ferroptosis"/>
    <property type="evidence" value="ECO:0000250"/>
    <property type="project" value="UniProtKB"/>
</dbReference>
<dbReference type="CDD" id="cd01056">
    <property type="entry name" value="Euk_Ferritin"/>
    <property type="match status" value="1"/>
</dbReference>
<dbReference type="FunFam" id="1.20.1260.10:FF:000024">
    <property type="entry name" value="Ferritin heavy chain"/>
    <property type="match status" value="1"/>
</dbReference>
<dbReference type="Gene3D" id="1.20.1260.10">
    <property type="match status" value="1"/>
</dbReference>
<dbReference type="InterPro" id="IPR001519">
    <property type="entry name" value="Ferritin"/>
</dbReference>
<dbReference type="InterPro" id="IPR012347">
    <property type="entry name" value="Ferritin-like"/>
</dbReference>
<dbReference type="InterPro" id="IPR009040">
    <property type="entry name" value="Ferritin-like_diiron"/>
</dbReference>
<dbReference type="InterPro" id="IPR009078">
    <property type="entry name" value="Ferritin-like_SF"/>
</dbReference>
<dbReference type="InterPro" id="IPR014034">
    <property type="entry name" value="Ferritin_CS"/>
</dbReference>
<dbReference type="InterPro" id="IPR008331">
    <property type="entry name" value="Ferritin_DPS_dom"/>
</dbReference>
<dbReference type="PANTHER" id="PTHR11431">
    <property type="entry name" value="FERRITIN"/>
    <property type="match status" value="1"/>
</dbReference>
<dbReference type="PANTHER" id="PTHR11431:SF37">
    <property type="entry name" value="FERRITIN HEAVY CHAIN"/>
    <property type="match status" value="1"/>
</dbReference>
<dbReference type="Pfam" id="PF00210">
    <property type="entry name" value="Ferritin"/>
    <property type="match status" value="1"/>
</dbReference>
<dbReference type="SUPFAM" id="SSF47240">
    <property type="entry name" value="Ferritin-like"/>
    <property type="match status" value="1"/>
</dbReference>
<dbReference type="PROSITE" id="PS00540">
    <property type="entry name" value="FERRITIN_1"/>
    <property type="match status" value="1"/>
</dbReference>
<dbReference type="PROSITE" id="PS00204">
    <property type="entry name" value="FERRITIN_2"/>
    <property type="match status" value="1"/>
</dbReference>
<dbReference type="PROSITE" id="PS50905">
    <property type="entry name" value="FERRITIN_LIKE"/>
    <property type="match status" value="1"/>
</dbReference>
<reference key="1">
    <citation type="submission" date="2002-05" db="EMBL/GenBank/DDBJ databases">
        <authorList>
            <person name="Takafuji V.A."/>
            <person name="Sharova L.V."/>
            <person name="Crisman M.V."/>
            <person name="Howard R.D."/>
        </authorList>
    </citation>
    <scope>NUCLEOTIDE SEQUENCE [MRNA]</scope>
</reference>
<reference key="2">
    <citation type="journal article" date="2005" name="DNA Seq.">
        <title>Sequence analysis of canine and equine ferritin H and L subunit cDNAs.</title>
        <authorList>
            <person name="Orino K."/>
            <person name="Miura T."/>
            <person name="Muto S."/>
            <person name="Watanabe K."/>
        </authorList>
    </citation>
    <scope>NUCLEOTIDE SEQUENCE [MRNA]</scope>
    <source>
        <tissue>Leukocyte</tissue>
        <tissue>Spleen</tissue>
    </source>
</reference>
<organism>
    <name type="scientific">Equus caballus</name>
    <name type="common">Horse</name>
    <dbReference type="NCBI Taxonomy" id="9796"/>
    <lineage>
        <taxon>Eukaryota</taxon>
        <taxon>Metazoa</taxon>
        <taxon>Chordata</taxon>
        <taxon>Craniata</taxon>
        <taxon>Vertebrata</taxon>
        <taxon>Euteleostomi</taxon>
        <taxon>Mammalia</taxon>
        <taxon>Eutheria</taxon>
        <taxon>Laurasiatheria</taxon>
        <taxon>Perissodactyla</taxon>
        <taxon>Equidae</taxon>
        <taxon>Equus</taxon>
    </lineage>
</organism>
<proteinExistence type="evidence at transcript level"/>
<sequence length="182" mass="21269">MTTAFPSQVRQNYHQDSEAAINRQINLELHASYVYLSMSFYFDRDDVALKNFAKYFLHQSHEEREHAEKLMKLQNQRGGRIFLQDIKKPDQDDWENGLKAMECALHLEKNVNESLLELHKLATDKNDPHLCDFLETHYLNEQVKAIKELGDHVTNLRRMGAPESGMAEYLFDKHTLGECDES</sequence>
<evidence type="ECO:0000250" key="1">
    <source>
        <dbReference type="UniProtKB" id="P02794"/>
    </source>
</evidence>
<evidence type="ECO:0000250" key="2">
    <source>
        <dbReference type="UniProtKB" id="P09528"/>
    </source>
</evidence>
<evidence type="ECO:0000250" key="3">
    <source>
        <dbReference type="UniProtKB" id="P19130"/>
    </source>
</evidence>
<evidence type="ECO:0000255" key="4">
    <source>
        <dbReference type="PROSITE-ProRule" id="PRU00085"/>
    </source>
</evidence>
<evidence type="ECO:0000305" key="5"/>
<accession>Q8MIP0</accession>